<accession>Q68AP4</accession>
<sequence length="542" mass="58828">MTQMRDLMIINANVRTVDARNSCAQAVLVSGGRIAIVGTETEVRGAAAPDAEVLDVSGKTVVPGFIDAHNHLSVAAFAPDSVDCSTPPLATLDEVLEVIERHCRNIPPGQWVRGINFHASHIREQRNPTRYELDEVAPNNPFFLIDASCHAGFANSAALDLVGIGAHTPEPWGGEIERDLSGKPTGTLLEAAANLLHSASWNDYAERDWDRAVELLHSKMNDYLAVGLTGVGDAMVTAKSAELYRRADAAGKMPFTLQQLHGGDHFFSMQDLGRSDTVDRIMEPESYLLRGGAMKIFVDRAYPSPAIDQIHDGCKTHVGANFYSKSEVHDLAVRASKLGINLAIHGMGNCAIDIVLDAYEAVRRQSNADTVLRLEHAFIAETGQGQRMADLGIDLVANPGLAFGWGEVFNMWRGENQEHLKLFPVRSMLDAGVRVSLASDHPCGTYSPAEIMWTAVARETMAGAPLEPDEAVTADEALRMYTINPAHASGRGSEEGSIEAGKRANLLVLDRDPVDCATGELRELQVLRTYVDGVLRYERTGS</sequence>
<dbReference type="EC" id="3.5.1.91"/>
<dbReference type="EMBL" id="AB164325">
    <property type="protein sequence ID" value="BAD37143.1"/>
    <property type="molecule type" value="Genomic_DNA"/>
</dbReference>
<dbReference type="SMR" id="Q68AP4"/>
<dbReference type="KEGG" id="ag:BAD37143"/>
<dbReference type="BioCyc" id="MetaCyc:MONOMER-15822"/>
<dbReference type="BRENDA" id="3.5.1.91">
    <property type="organism ID" value="452"/>
</dbReference>
<dbReference type="SABIO-RK" id="Q68AP4"/>
<dbReference type="GO" id="GO:0033966">
    <property type="term" value="F:N-substituted formamide deformylase activity"/>
    <property type="evidence" value="ECO:0000314"/>
    <property type="project" value="UniProtKB"/>
</dbReference>
<dbReference type="CDD" id="cd01300">
    <property type="entry name" value="YtcJ_like"/>
    <property type="match status" value="1"/>
</dbReference>
<dbReference type="Gene3D" id="3.10.310.70">
    <property type="match status" value="1"/>
</dbReference>
<dbReference type="Gene3D" id="3.20.20.140">
    <property type="entry name" value="Metal-dependent hydrolases"/>
    <property type="match status" value="1"/>
</dbReference>
<dbReference type="Gene3D" id="2.30.40.10">
    <property type="entry name" value="Urease, subunit C, domain 1"/>
    <property type="match status" value="1"/>
</dbReference>
<dbReference type="InterPro" id="IPR013108">
    <property type="entry name" value="Amidohydro_3"/>
</dbReference>
<dbReference type="InterPro" id="IPR011059">
    <property type="entry name" value="Metal-dep_hydrolase_composite"/>
</dbReference>
<dbReference type="InterPro" id="IPR032466">
    <property type="entry name" value="Metal_Hydrolase"/>
</dbReference>
<dbReference type="InterPro" id="IPR033932">
    <property type="entry name" value="YtcJ-like"/>
</dbReference>
<dbReference type="PANTHER" id="PTHR22642">
    <property type="entry name" value="IMIDAZOLONEPROPIONASE"/>
    <property type="match status" value="1"/>
</dbReference>
<dbReference type="PANTHER" id="PTHR22642:SF2">
    <property type="entry name" value="PROTEIN LONG AFTER FAR-RED 3"/>
    <property type="match status" value="1"/>
</dbReference>
<dbReference type="Pfam" id="PF07969">
    <property type="entry name" value="Amidohydro_3"/>
    <property type="match status" value="1"/>
</dbReference>
<dbReference type="SUPFAM" id="SSF51338">
    <property type="entry name" value="Composite domain of metallo-dependent hydrolases"/>
    <property type="match status" value="1"/>
</dbReference>
<dbReference type="SUPFAM" id="SSF51556">
    <property type="entry name" value="Metallo-dependent hydrolases"/>
    <property type="match status" value="1"/>
</dbReference>
<protein>
    <recommendedName>
        <fullName evidence="3 5">N-substituted formamide deformylase</fullName>
        <ecNumber>3.5.1.91</ecNumber>
    </recommendedName>
</protein>
<organism>
    <name type="scientific">Arthrobacter pascens</name>
    <dbReference type="NCBI Taxonomy" id="1677"/>
    <lineage>
        <taxon>Bacteria</taxon>
        <taxon>Bacillati</taxon>
        <taxon>Actinomycetota</taxon>
        <taxon>Actinomycetes</taxon>
        <taxon>Micrococcales</taxon>
        <taxon>Micrococcaceae</taxon>
        <taxon>Arthrobacter</taxon>
    </lineage>
</organism>
<evidence type="ECO:0000269" key="1">
    <source>
    </source>
</evidence>
<evidence type="ECO:0000269" key="2">
    <source>
    </source>
</evidence>
<evidence type="ECO:0000303" key="3">
    <source>
    </source>
</evidence>
<evidence type="ECO:0000305" key="4"/>
<evidence type="ECO:0000312" key="5">
    <source>
        <dbReference type="EMBL" id="BAD37143.1"/>
    </source>
</evidence>
<comment type="function">
    <text evidence="1">Hydrolyzes N-substituted formamides, but not amides. N-benzylformamide is the preferred substrate, while N-butylformamide is hydrolyzed at a much lower rate. Has very low activity towards allylformamide, N-(2-cyclohex-1-enylethyl)formamide and N-(alpha-methylbenzyl)formamide.</text>
</comment>
<comment type="catalytic activity">
    <reaction evidence="1">
        <text>N-benzylformamide + H2O = benzylamine + formate</text>
        <dbReference type="Rhea" id="RHEA:12096"/>
        <dbReference type="ChEBI" id="CHEBI:15377"/>
        <dbReference type="ChEBI" id="CHEBI:15740"/>
        <dbReference type="ChEBI" id="CHEBI:41117"/>
        <dbReference type="ChEBI" id="CHEBI:225238"/>
        <dbReference type="EC" id="3.5.1.91"/>
    </reaction>
</comment>
<comment type="cofactor">
    <cofactor evidence="1">
        <name>Zn(2+)</name>
        <dbReference type="ChEBI" id="CHEBI:29105"/>
    </cofactor>
</comment>
<comment type="activity regulation">
    <text evidence="1">Completely inhibited by HgCl(2), CuCl, CuCl(2) and AgNO(3). Partially inhibited by ZnCl(2) and SnCl(2). Almost completely inhibited by the reducing reagent DTT. Partially inhibited by phenylhydrazine. Moderately inhibited by phenanthroline and 8-hydroxyquinoline. Completely inhibited by the thiol-specific inhibitors N-ethylmaleimide and p-chloromercuribenzoate. Not inhibited by the carbonyl-specific inhibitors aminoguanidine and semicarbazide, the chelating agents alpha,alpha'-dipyridyl, KCN, diethyldithiocarbamate and EDTA, or the oxidizing reagents and serine-modifying reagents such as H(2)O(2), ammonium persulfate, phenylmethanesulfonyl fluoride and diisopropyl fluorophosphates.</text>
</comment>
<comment type="biophysicochemical properties">
    <kinetics>
        <KM evidence="1">0.075 mM for N-benzylformamide</KM>
        <KM evidence="1">7.5 mM for N-butylformamide</KM>
        <Vmax evidence="1">52.7 mmol/min/mg enzyme with N-benzylformamide as substrate</Vmax>
        <Vmax evidence="1">6.3 mmol/min/mg enzyme with N-butylformamide as substrate</Vmax>
    </kinetics>
    <phDependence>
        <text evidence="1">Optimum pH is 7.0. Stable from pH 7.5 to 8.5.</text>
    </phDependence>
    <temperatureDependence>
        <text evidence="1">Optimum temperature is 35 degrees Celsius. Inactive following 30 minutes incubation at 50 degrees Celsius or above, no loss of activity following 30 minutes incubation at 25 degrees Celsius or below. Little loss of activity following 30 minutes incubation at 35 or 30 degrees Celsius.</text>
    </temperatureDependence>
</comment>
<comment type="subunit">
    <text evidence="1">Homodimer.</text>
</comment>
<comment type="induction">
    <text evidence="1 2">Induced by N-benzylformamide. Repressed by glucose.</text>
</comment>
<comment type="mass spectrometry" mass="58556.0" method="MALDI" evidence="1"/>
<comment type="similarity">
    <text evidence="4">Belongs to the metallo-dependent hydrolases superfamily.</text>
</comment>
<gene>
    <name evidence="5" type="primary">nfdA</name>
</gene>
<name>NFDA_ARTPS</name>
<reference evidence="4 5" key="1">
    <citation type="journal article" date="2004" name="Proc. Natl. Acad. Sci. U.S.A.">
        <title>Amine-synthesizing enzyme N-substituted formamide deformylase: screening, purification, characterization, and gene cloning.</title>
        <authorList>
            <person name="Fukatsu H."/>
            <person name="Hashimoto Y."/>
            <person name="Goda M."/>
            <person name="Higashibata H."/>
            <person name="Kobayashi M."/>
        </authorList>
    </citation>
    <scope>NUCLEOTIDE SEQUENCE [GENOMIC DNA]</scope>
    <scope>PROTEIN SEQUENCE OF 3-12 AND 347-354</scope>
    <scope>FUNCTION</scope>
    <scope>CATALYTIC ACTIVITY</scope>
    <scope>COFACTOR</scope>
    <scope>ACTIVITY REGULATION</scope>
    <scope>BIOPHYSICOCHEMICAL PROPERTIES</scope>
    <scope>SUBUNIT</scope>
    <scope>INDUCTION</scope>
    <scope>MASS SPECTROMETRY</scope>
    <source>
        <strain evidence="5">F164</strain>
    </source>
</reference>
<reference evidence="4" key="2">
    <citation type="journal article" date="2005" name="Biosci. Biotechnol. Biochem.">
        <title>Optimum culture conditions for the production of N-substituted formamide deformylase by Arthrobacter pascens F164.</title>
        <authorList>
            <person name="Fukatsu H."/>
            <person name="Goda M."/>
            <person name="Hashimoto Y."/>
            <person name="Higashibata H."/>
            <person name="Kobayashi M."/>
        </authorList>
    </citation>
    <scope>INDUCTION</scope>
</reference>
<proteinExistence type="evidence at protein level"/>
<keyword id="KW-0903">Direct protein sequencing</keyword>
<keyword id="KW-0378">Hydrolase</keyword>
<feature type="propeptide" id="PRO_0000400093" evidence="1">
    <location>
        <begin position="1"/>
        <end position="2"/>
    </location>
</feature>
<feature type="chain" id="PRO_0000400094" description="N-substituted formamide deformylase" evidence="1">
    <location>
        <begin position="3"/>
        <end position="542"/>
    </location>
</feature>